<dbReference type="EMBL" id="CP000362">
    <property type="protein sequence ID" value="ABG33470.1"/>
    <property type="molecule type" value="Genomic_DNA"/>
</dbReference>
<dbReference type="RefSeq" id="WP_011570080.1">
    <property type="nucleotide sequence ID" value="NC_008209.1"/>
</dbReference>
<dbReference type="SMR" id="Q160X3"/>
<dbReference type="STRING" id="375451.RD1_4023"/>
<dbReference type="KEGG" id="rde:RD1_4023"/>
<dbReference type="eggNOG" id="COG0080">
    <property type="taxonomic scope" value="Bacteria"/>
</dbReference>
<dbReference type="HOGENOM" id="CLU_074237_2_1_5"/>
<dbReference type="OrthoDB" id="9802408at2"/>
<dbReference type="Proteomes" id="UP000007029">
    <property type="component" value="Chromosome"/>
</dbReference>
<dbReference type="GO" id="GO:0022625">
    <property type="term" value="C:cytosolic large ribosomal subunit"/>
    <property type="evidence" value="ECO:0007669"/>
    <property type="project" value="TreeGrafter"/>
</dbReference>
<dbReference type="GO" id="GO:0070180">
    <property type="term" value="F:large ribosomal subunit rRNA binding"/>
    <property type="evidence" value="ECO:0007669"/>
    <property type="project" value="UniProtKB-UniRule"/>
</dbReference>
<dbReference type="GO" id="GO:0003735">
    <property type="term" value="F:structural constituent of ribosome"/>
    <property type="evidence" value="ECO:0007669"/>
    <property type="project" value="InterPro"/>
</dbReference>
<dbReference type="GO" id="GO:0006412">
    <property type="term" value="P:translation"/>
    <property type="evidence" value="ECO:0007669"/>
    <property type="project" value="UniProtKB-UniRule"/>
</dbReference>
<dbReference type="CDD" id="cd00349">
    <property type="entry name" value="Ribosomal_L11"/>
    <property type="match status" value="1"/>
</dbReference>
<dbReference type="FunFam" id="1.10.10.250:FF:000001">
    <property type="entry name" value="50S ribosomal protein L11"/>
    <property type="match status" value="1"/>
</dbReference>
<dbReference type="FunFam" id="3.30.1550.10:FF:000001">
    <property type="entry name" value="50S ribosomal protein L11"/>
    <property type="match status" value="1"/>
</dbReference>
<dbReference type="Gene3D" id="1.10.10.250">
    <property type="entry name" value="Ribosomal protein L11, C-terminal domain"/>
    <property type="match status" value="1"/>
</dbReference>
<dbReference type="Gene3D" id="3.30.1550.10">
    <property type="entry name" value="Ribosomal protein L11/L12, N-terminal domain"/>
    <property type="match status" value="1"/>
</dbReference>
<dbReference type="HAMAP" id="MF_00736">
    <property type="entry name" value="Ribosomal_uL11"/>
    <property type="match status" value="1"/>
</dbReference>
<dbReference type="InterPro" id="IPR000911">
    <property type="entry name" value="Ribosomal_uL11"/>
</dbReference>
<dbReference type="InterPro" id="IPR006519">
    <property type="entry name" value="Ribosomal_uL11_bac-typ"/>
</dbReference>
<dbReference type="InterPro" id="IPR020783">
    <property type="entry name" value="Ribosomal_uL11_C"/>
</dbReference>
<dbReference type="InterPro" id="IPR036769">
    <property type="entry name" value="Ribosomal_uL11_C_sf"/>
</dbReference>
<dbReference type="InterPro" id="IPR020784">
    <property type="entry name" value="Ribosomal_uL11_N"/>
</dbReference>
<dbReference type="InterPro" id="IPR036796">
    <property type="entry name" value="Ribosomal_uL11_N_sf"/>
</dbReference>
<dbReference type="NCBIfam" id="TIGR01632">
    <property type="entry name" value="L11_bact"/>
    <property type="match status" value="1"/>
</dbReference>
<dbReference type="PANTHER" id="PTHR11661">
    <property type="entry name" value="60S RIBOSOMAL PROTEIN L12"/>
    <property type="match status" value="1"/>
</dbReference>
<dbReference type="PANTHER" id="PTHR11661:SF1">
    <property type="entry name" value="LARGE RIBOSOMAL SUBUNIT PROTEIN UL11M"/>
    <property type="match status" value="1"/>
</dbReference>
<dbReference type="Pfam" id="PF00298">
    <property type="entry name" value="Ribosomal_L11"/>
    <property type="match status" value="1"/>
</dbReference>
<dbReference type="Pfam" id="PF03946">
    <property type="entry name" value="Ribosomal_L11_N"/>
    <property type="match status" value="1"/>
</dbReference>
<dbReference type="SMART" id="SM00649">
    <property type="entry name" value="RL11"/>
    <property type="match status" value="1"/>
</dbReference>
<dbReference type="SUPFAM" id="SSF54747">
    <property type="entry name" value="Ribosomal L11/L12e N-terminal domain"/>
    <property type="match status" value="1"/>
</dbReference>
<dbReference type="SUPFAM" id="SSF46906">
    <property type="entry name" value="Ribosomal protein L11, C-terminal domain"/>
    <property type="match status" value="1"/>
</dbReference>
<keyword id="KW-0488">Methylation</keyword>
<keyword id="KW-1185">Reference proteome</keyword>
<keyword id="KW-0687">Ribonucleoprotein</keyword>
<keyword id="KW-0689">Ribosomal protein</keyword>
<keyword id="KW-0694">RNA-binding</keyword>
<keyword id="KW-0699">rRNA-binding</keyword>
<organism>
    <name type="scientific">Roseobacter denitrificans (strain ATCC 33942 / OCh 114)</name>
    <name type="common">Erythrobacter sp. (strain OCh 114)</name>
    <name type="synonym">Roseobacter denitrificans</name>
    <dbReference type="NCBI Taxonomy" id="375451"/>
    <lineage>
        <taxon>Bacteria</taxon>
        <taxon>Pseudomonadati</taxon>
        <taxon>Pseudomonadota</taxon>
        <taxon>Alphaproteobacteria</taxon>
        <taxon>Rhodobacterales</taxon>
        <taxon>Roseobacteraceae</taxon>
        <taxon>Roseobacter</taxon>
    </lineage>
</organism>
<reference key="1">
    <citation type="journal article" date="2007" name="J. Bacteriol.">
        <title>The complete genome sequence of Roseobacter denitrificans reveals a mixotrophic rather than photosynthetic metabolism.</title>
        <authorList>
            <person name="Swingley W.D."/>
            <person name="Sadekar S."/>
            <person name="Mastrian S.D."/>
            <person name="Matthies H.J."/>
            <person name="Hao J."/>
            <person name="Ramos H."/>
            <person name="Acharya C.R."/>
            <person name="Conrad A.L."/>
            <person name="Taylor H.L."/>
            <person name="Dejesa L.C."/>
            <person name="Shah M.K."/>
            <person name="O'Huallachain M.E."/>
            <person name="Lince M.T."/>
            <person name="Blankenship R.E."/>
            <person name="Beatty J.T."/>
            <person name="Touchman J.W."/>
        </authorList>
    </citation>
    <scope>NUCLEOTIDE SEQUENCE [LARGE SCALE GENOMIC DNA]</scope>
    <source>
        <strain>ATCC 33942 / OCh 114</strain>
    </source>
</reference>
<sequence>MAKKLVGSMKLQVPAGQANPSPPVGPALGQRGINIMEFCKAFNAKTADMEQGAPCPTVITYYQDKSFTMDIKTPPASYYLKKAAKLSSGAKTPSREVVGYVSSKQVREIAEAKMKDLNATSIEAAMKIILGSARSMGIEVK</sequence>
<accession>Q160X3</accession>
<evidence type="ECO:0000255" key="1">
    <source>
        <dbReference type="HAMAP-Rule" id="MF_00736"/>
    </source>
</evidence>
<evidence type="ECO:0000305" key="2"/>
<protein>
    <recommendedName>
        <fullName evidence="1">Large ribosomal subunit protein uL11</fullName>
    </recommendedName>
    <alternativeName>
        <fullName evidence="2">50S ribosomal protein L11</fullName>
    </alternativeName>
</protein>
<comment type="function">
    <text evidence="1">Forms part of the ribosomal stalk which helps the ribosome interact with GTP-bound translation factors.</text>
</comment>
<comment type="subunit">
    <text evidence="1">Part of the ribosomal stalk of the 50S ribosomal subunit. Interacts with L10 and the large rRNA to form the base of the stalk. L10 forms an elongated spine to which L12 dimers bind in a sequential fashion forming a multimeric L10(L12)X complex.</text>
</comment>
<comment type="PTM">
    <text evidence="1">One or more lysine residues are methylated.</text>
</comment>
<comment type="similarity">
    <text evidence="1">Belongs to the universal ribosomal protein uL11 family.</text>
</comment>
<gene>
    <name evidence="1" type="primary">rplK</name>
    <name type="ordered locus">RD1_4023</name>
</gene>
<feature type="chain" id="PRO_0000258205" description="Large ribosomal subunit protein uL11">
    <location>
        <begin position="1"/>
        <end position="141"/>
    </location>
</feature>
<name>RL11_ROSDO</name>
<proteinExistence type="inferred from homology"/>